<sequence>MSHAPRYAELRCKSCFSFLEGASHPEELVGRAAELGLSALALADVNGLYGIVRAHAEAKRQGLPLIVGAELVVAGLAPGRPARLVLLAQDREGYAGLCRLVTRAHCGEGWTGAPERRERDAVAVPFEAVAAGARGLFALYPGADGDAVARLKDAFGRRAALAVTRHRVAGEEARVLAARSAGRRLGVPVAVTNDVHTHARARQVLQDVLTCVRHGTTVDRAGRRLFPNAERTLKGPEELARLWSDFPEGLAAAADIADQCRFRMEEIRGEHPLPPVVVERGALAGGVEVATSSPAQAAREGARTATPSLSLRASLPAERPAAPEPEGPAASAPEGPASSEPGEPGLAGAGGGTGAAAGTDRDGALAGMSLLRELVREGARWRYGGEPPEDVARQLARELDLVESLGYASYFLTVWDVVRFARSRGILCQGRGSAANSAVCYVLGITSIDPVRMGLLFERFISAERGEPPDIDVDFEHERREEVLQYVYQRYGRDRAGMVCEVITYRGKSALRDVGKALGLSLGQVDRLAKLIGTYEDLGQVGPELLAQAGLDAADSERVRMTLALARELQGFPRHLSIHVGGFVITRRPLCETVPIEPAAMPGRTIVQWDKDDLSELDLLKVDLLGLGMLTALSRALALLARHRPAPASPTAVPHPDALATIPAEDPEVYEMLGRADSIGVFQVESRAQMSLAPRLRPRNFYDLVISVAIIRPGPIQGGMIHPYLRRRDGKEQVRYPYAPLEPVLARTLGVPLFQEQAMRLAVIAAGFTPGEADELRRVMTHRRSHEKLAAMKARLVAGMAERGISGADAEEIFKQLLGFAGYGFPESHAASFALLVYASAWLKRYHPAAFACALLNSQPMGFYAPHTLVEDAKRHGVEVRGVDVGCSGWESSLEGAAPGRPAAPGETAVLRVGLHAVRGLPRAVGEAILEARAAGPFGSVAELVRRARLSRAWLVRLAEAGALGALAPDRRDAVWRSLAVEADGGDLFAGLAPPEPEVALPAASAADEVSADFATTGLSVRGHPMALVRPGLGGDRIRTARELGRLPDRAPVEVAGLVIVRQRPETARGIVFVSLEDETGIANLVVMPDVYERFRPVVRGAPFLLARGRVERSGKVVNVRVDSVAPLALAPSMGARARDFH</sequence>
<gene>
    <name evidence="1" type="primary">dnaE2</name>
    <name type="ordered locus">A2cp1_2336</name>
</gene>
<feature type="chain" id="PRO_1000188730" description="Error-prone DNA polymerase">
    <location>
        <begin position="1"/>
        <end position="1142"/>
    </location>
</feature>
<feature type="region of interest" description="Disordered" evidence="2">
    <location>
        <begin position="291"/>
        <end position="361"/>
    </location>
</feature>
<feature type="compositionally biased region" description="Low complexity" evidence="2">
    <location>
        <begin position="311"/>
        <end position="320"/>
    </location>
</feature>
<feature type="compositionally biased region" description="Low complexity" evidence="2">
    <location>
        <begin position="327"/>
        <end position="344"/>
    </location>
</feature>
<feature type="compositionally biased region" description="Gly residues" evidence="2">
    <location>
        <begin position="345"/>
        <end position="355"/>
    </location>
</feature>
<accession>B8JAF5</accession>
<organism>
    <name type="scientific">Anaeromyxobacter dehalogenans (strain 2CP-1 / ATCC BAA-258)</name>
    <dbReference type="NCBI Taxonomy" id="455488"/>
    <lineage>
        <taxon>Bacteria</taxon>
        <taxon>Pseudomonadati</taxon>
        <taxon>Myxococcota</taxon>
        <taxon>Myxococcia</taxon>
        <taxon>Myxococcales</taxon>
        <taxon>Cystobacterineae</taxon>
        <taxon>Anaeromyxobacteraceae</taxon>
        <taxon>Anaeromyxobacter</taxon>
    </lineage>
</organism>
<protein>
    <recommendedName>
        <fullName evidence="1">Error-prone DNA polymerase</fullName>
        <ecNumber evidence="1">2.7.7.7</ecNumber>
    </recommendedName>
</protein>
<name>DNAE2_ANAD2</name>
<proteinExistence type="inferred from homology"/>
<keyword id="KW-0963">Cytoplasm</keyword>
<keyword id="KW-0227">DNA damage</keyword>
<keyword id="KW-0234">DNA repair</keyword>
<keyword id="KW-0235">DNA replication</keyword>
<keyword id="KW-0239">DNA-directed DNA polymerase</keyword>
<keyword id="KW-0548">Nucleotidyltransferase</keyword>
<keyword id="KW-0808">Transferase</keyword>
<dbReference type="EC" id="2.7.7.7" evidence="1"/>
<dbReference type="EMBL" id="CP001359">
    <property type="protein sequence ID" value="ACL65674.1"/>
    <property type="molecule type" value="Genomic_DNA"/>
</dbReference>
<dbReference type="RefSeq" id="WP_012633501.1">
    <property type="nucleotide sequence ID" value="NC_011891.1"/>
</dbReference>
<dbReference type="SMR" id="B8JAF5"/>
<dbReference type="KEGG" id="acp:A2cp1_2336"/>
<dbReference type="HOGENOM" id="CLU_001600_4_0_7"/>
<dbReference type="Proteomes" id="UP000007089">
    <property type="component" value="Chromosome"/>
</dbReference>
<dbReference type="GO" id="GO:0005737">
    <property type="term" value="C:cytoplasm"/>
    <property type="evidence" value="ECO:0007669"/>
    <property type="project" value="UniProtKB-SubCell"/>
</dbReference>
<dbReference type="GO" id="GO:0008408">
    <property type="term" value="F:3'-5' exonuclease activity"/>
    <property type="evidence" value="ECO:0007669"/>
    <property type="project" value="InterPro"/>
</dbReference>
<dbReference type="GO" id="GO:0003887">
    <property type="term" value="F:DNA-directed DNA polymerase activity"/>
    <property type="evidence" value="ECO:0007669"/>
    <property type="project" value="UniProtKB-KW"/>
</dbReference>
<dbReference type="GO" id="GO:0003676">
    <property type="term" value="F:nucleic acid binding"/>
    <property type="evidence" value="ECO:0007669"/>
    <property type="project" value="InterPro"/>
</dbReference>
<dbReference type="GO" id="GO:0006281">
    <property type="term" value="P:DNA repair"/>
    <property type="evidence" value="ECO:0007669"/>
    <property type="project" value="UniProtKB-KW"/>
</dbReference>
<dbReference type="GO" id="GO:0006260">
    <property type="term" value="P:DNA replication"/>
    <property type="evidence" value="ECO:0007669"/>
    <property type="project" value="UniProtKB-KW"/>
</dbReference>
<dbReference type="CDD" id="cd04485">
    <property type="entry name" value="DnaE_OBF"/>
    <property type="match status" value="1"/>
</dbReference>
<dbReference type="CDD" id="cd07434">
    <property type="entry name" value="PHP_PolIIIA_DnaE2"/>
    <property type="match status" value="1"/>
</dbReference>
<dbReference type="Gene3D" id="1.10.150.870">
    <property type="match status" value="1"/>
</dbReference>
<dbReference type="Gene3D" id="1.10.10.1600">
    <property type="entry name" value="Bacterial DNA polymerase III alpha subunit, thumb domain"/>
    <property type="match status" value="1"/>
</dbReference>
<dbReference type="Gene3D" id="3.20.20.140">
    <property type="entry name" value="Metal-dependent hydrolases"/>
    <property type="match status" value="1"/>
</dbReference>
<dbReference type="HAMAP" id="MF_01902">
    <property type="entry name" value="DNApol_error_prone"/>
    <property type="match status" value="1"/>
</dbReference>
<dbReference type="InterPro" id="IPR011708">
    <property type="entry name" value="DNA_pol3_alpha_NTPase_dom"/>
</dbReference>
<dbReference type="InterPro" id="IPR041931">
    <property type="entry name" value="DNA_pol3_alpha_thumb_dom"/>
</dbReference>
<dbReference type="InterPro" id="IPR040982">
    <property type="entry name" value="DNA_pol3_finger"/>
</dbReference>
<dbReference type="InterPro" id="IPR023073">
    <property type="entry name" value="DnaE2"/>
</dbReference>
<dbReference type="InterPro" id="IPR004805">
    <property type="entry name" value="DnaE2/DnaE/PolC"/>
</dbReference>
<dbReference type="InterPro" id="IPR029460">
    <property type="entry name" value="DNAPol_HHH"/>
</dbReference>
<dbReference type="InterPro" id="IPR004365">
    <property type="entry name" value="NA-bd_OB_tRNA"/>
</dbReference>
<dbReference type="InterPro" id="IPR004013">
    <property type="entry name" value="PHP_dom"/>
</dbReference>
<dbReference type="InterPro" id="IPR003141">
    <property type="entry name" value="Pol/His_phosphatase_N"/>
</dbReference>
<dbReference type="InterPro" id="IPR016195">
    <property type="entry name" value="Pol/histidinol_Pase-like"/>
</dbReference>
<dbReference type="NCBIfam" id="TIGR00594">
    <property type="entry name" value="polc"/>
    <property type="match status" value="1"/>
</dbReference>
<dbReference type="NCBIfam" id="NF004225">
    <property type="entry name" value="PRK05672.1"/>
    <property type="match status" value="1"/>
</dbReference>
<dbReference type="PANTHER" id="PTHR32294">
    <property type="entry name" value="DNA POLYMERASE III SUBUNIT ALPHA"/>
    <property type="match status" value="1"/>
</dbReference>
<dbReference type="PANTHER" id="PTHR32294:SF4">
    <property type="entry name" value="ERROR-PRONE DNA POLYMERASE"/>
    <property type="match status" value="1"/>
</dbReference>
<dbReference type="Pfam" id="PF07733">
    <property type="entry name" value="DNA_pol3_alpha"/>
    <property type="match status" value="1"/>
</dbReference>
<dbReference type="Pfam" id="PF17657">
    <property type="entry name" value="DNA_pol3_finger"/>
    <property type="match status" value="1"/>
</dbReference>
<dbReference type="Pfam" id="PF14579">
    <property type="entry name" value="HHH_6"/>
    <property type="match status" value="1"/>
</dbReference>
<dbReference type="Pfam" id="PF02811">
    <property type="entry name" value="PHP"/>
    <property type="match status" value="1"/>
</dbReference>
<dbReference type="Pfam" id="PF01336">
    <property type="entry name" value="tRNA_anti-codon"/>
    <property type="match status" value="1"/>
</dbReference>
<dbReference type="SMART" id="SM00481">
    <property type="entry name" value="POLIIIAc"/>
    <property type="match status" value="1"/>
</dbReference>
<dbReference type="SUPFAM" id="SSF89550">
    <property type="entry name" value="PHP domain-like"/>
    <property type="match status" value="1"/>
</dbReference>
<evidence type="ECO:0000255" key="1">
    <source>
        <dbReference type="HAMAP-Rule" id="MF_01902"/>
    </source>
</evidence>
<evidence type="ECO:0000256" key="2">
    <source>
        <dbReference type="SAM" id="MobiDB-lite"/>
    </source>
</evidence>
<reference key="1">
    <citation type="submission" date="2009-01" db="EMBL/GenBank/DDBJ databases">
        <title>Complete sequence of Anaeromyxobacter dehalogenans 2CP-1.</title>
        <authorList>
            <person name="Lucas S."/>
            <person name="Copeland A."/>
            <person name="Lapidus A."/>
            <person name="Glavina del Rio T."/>
            <person name="Dalin E."/>
            <person name="Tice H."/>
            <person name="Bruce D."/>
            <person name="Goodwin L."/>
            <person name="Pitluck S."/>
            <person name="Saunders E."/>
            <person name="Brettin T."/>
            <person name="Detter J.C."/>
            <person name="Han C."/>
            <person name="Larimer F."/>
            <person name="Land M."/>
            <person name="Hauser L."/>
            <person name="Kyrpides N."/>
            <person name="Ovchinnikova G."/>
            <person name="Beliaev A.S."/>
            <person name="Richardson P."/>
        </authorList>
    </citation>
    <scope>NUCLEOTIDE SEQUENCE [LARGE SCALE GENOMIC DNA]</scope>
    <source>
        <strain>2CP-1 / ATCC BAA-258</strain>
    </source>
</reference>
<comment type="function">
    <text evidence="1">DNA polymerase involved in damage-induced mutagenesis and translesion synthesis (TLS). It is not the major replicative DNA polymerase.</text>
</comment>
<comment type="catalytic activity">
    <reaction evidence="1">
        <text>DNA(n) + a 2'-deoxyribonucleoside 5'-triphosphate = DNA(n+1) + diphosphate</text>
        <dbReference type="Rhea" id="RHEA:22508"/>
        <dbReference type="Rhea" id="RHEA-COMP:17339"/>
        <dbReference type="Rhea" id="RHEA-COMP:17340"/>
        <dbReference type="ChEBI" id="CHEBI:33019"/>
        <dbReference type="ChEBI" id="CHEBI:61560"/>
        <dbReference type="ChEBI" id="CHEBI:173112"/>
        <dbReference type="EC" id="2.7.7.7"/>
    </reaction>
</comment>
<comment type="subcellular location">
    <subcellularLocation>
        <location evidence="1">Cytoplasm</location>
    </subcellularLocation>
</comment>
<comment type="similarity">
    <text evidence="1">Belongs to the DNA polymerase type-C family. DnaE2 subfamily.</text>
</comment>